<evidence type="ECO:0000255" key="1">
    <source>
        <dbReference type="HAMAP-Rule" id="MF_00087"/>
    </source>
</evidence>
<feature type="chain" id="PRO_1000075402" description="Glutamyl-tRNA reductase">
    <location>
        <begin position="1"/>
        <end position="434"/>
    </location>
</feature>
<feature type="active site" description="Nucleophile" evidence="1">
    <location>
        <position position="55"/>
    </location>
</feature>
<feature type="binding site" evidence="1">
    <location>
        <begin position="54"/>
        <end position="57"/>
    </location>
    <ligand>
        <name>substrate</name>
    </ligand>
</feature>
<feature type="binding site" evidence="1">
    <location>
        <position position="113"/>
    </location>
    <ligand>
        <name>substrate</name>
    </ligand>
</feature>
<feature type="binding site" evidence="1">
    <location>
        <begin position="118"/>
        <end position="120"/>
    </location>
    <ligand>
        <name>substrate</name>
    </ligand>
</feature>
<feature type="binding site" evidence="1">
    <location>
        <position position="124"/>
    </location>
    <ligand>
        <name>substrate</name>
    </ligand>
</feature>
<feature type="binding site" evidence="1">
    <location>
        <begin position="193"/>
        <end position="198"/>
    </location>
    <ligand>
        <name>NADP(+)</name>
        <dbReference type="ChEBI" id="CHEBI:58349"/>
    </ligand>
</feature>
<feature type="site" description="Important for activity" evidence="1">
    <location>
        <position position="103"/>
    </location>
</feature>
<gene>
    <name evidence="1" type="primary">hemA</name>
    <name type="ordered locus">Caur_2593</name>
</gene>
<name>HEM1_CHLAA</name>
<keyword id="KW-0149">Chlorophyll biosynthesis</keyword>
<keyword id="KW-0521">NADP</keyword>
<keyword id="KW-0560">Oxidoreductase</keyword>
<keyword id="KW-0627">Porphyrin biosynthesis</keyword>
<keyword id="KW-1185">Reference proteome</keyword>
<organism>
    <name type="scientific">Chloroflexus aurantiacus (strain ATCC 29366 / DSM 635 / J-10-fl)</name>
    <dbReference type="NCBI Taxonomy" id="324602"/>
    <lineage>
        <taxon>Bacteria</taxon>
        <taxon>Bacillati</taxon>
        <taxon>Chloroflexota</taxon>
        <taxon>Chloroflexia</taxon>
        <taxon>Chloroflexales</taxon>
        <taxon>Chloroflexineae</taxon>
        <taxon>Chloroflexaceae</taxon>
        <taxon>Chloroflexus</taxon>
    </lineage>
</organism>
<comment type="function">
    <text evidence="1">Catalyzes the NADPH-dependent reduction of glutamyl-tRNA(Glu) to glutamate 1-semialdehyde (GSA).</text>
</comment>
<comment type="catalytic activity">
    <reaction evidence="1">
        <text>(S)-4-amino-5-oxopentanoate + tRNA(Glu) + NADP(+) = L-glutamyl-tRNA(Glu) + NADPH + H(+)</text>
        <dbReference type="Rhea" id="RHEA:12344"/>
        <dbReference type="Rhea" id="RHEA-COMP:9663"/>
        <dbReference type="Rhea" id="RHEA-COMP:9680"/>
        <dbReference type="ChEBI" id="CHEBI:15378"/>
        <dbReference type="ChEBI" id="CHEBI:57501"/>
        <dbReference type="ChEBI" id="CHEBI:57783"/>
        <dbReference type="ChEBI" id="CHEBI:58349"/>
        <dbReference type="ChEBI" id="CHEBI:78442"/>
        <dbReference type="ChEBI" id="CHEBI:78520"/>
        <dbReference type="EC" id="1.2.1.70"/>
    </reaction>
</comment>
<comment type="pathway">
    <text evidence="1">Porphyrin-containing compound metabolism; protoporphyrin-IX biosynthesis; 5-aminolevulinate from L-glutamyl-tRNA(Glu): step 1/2.</text>
</comment>
<comment type="pathway">
    <text evidence="1">Porphyrin-containing compound metabolism; chlorophyll biosynthesis.</text>
</comment>
<comment type="subunit">
    <text evidence="1">Homodimer.</text>
</comment>
<comment type="domain">
    <text evidence="1">Possesses an unusual extended V-shaped dimeric structure with each monomer consisting of three distinct domains arranged along a curved 'spinal' alpha-helix. The N-terminal catalytic domain specifically recognizes the glutamate moiety of the substrate. The second domain is the NADPH-binding domain, and the third C-terminal domain is responsible for dimerization.</text>
</comment>
<comment type="miscellaneous">
    <text evidence="1">During catalysis, the active site Cys acts as a nucleophile attacking the alpha-carbonyl group of tRNA-bound glutamate with the formation of a thioester intermediate between enzyme and glutamate, and the concomitant release of tRNA(Glu). The thioester intermediate is finally reduced by direct hydride transfer from NADPH, to form the product GSA.</text>
</comment>
<comment type="similarity">
    <text evidence="1">Belongs to the glutamyl-tRNA reductase family.</text>
</comment>
<protein>
    <recommendedName>
        <fullName evidence="1">Glutamyl-tRNA reductase</fullName>
        <shortName evidence="1">GluTR</shortName>
        <ecNumber evidence="1">1.2.1.70</ecNumber>
    </recommendedName>
</protein>
<dbReference type="EC" id="1.2.1.70" evidence="1"/>
<dbReference type="EMBL" id="CP000909">
    <property type="protein sequence ID" value="ABY35799.1"/>
    <property type="molecule type" value="Genomic_DNA"/>
</dbReference>
<dbReference type="RefSeq" id="WP_012258452.1">
    <property type="nucleotide sequence ID" value="NC_010175.1"/>
</dbReference>
<dbReference type="RefSeq" id="YP_001636188.1">
    <property type="nucleotide sequence ID" value="NC_010175.1"/>
</dbReference>
<dbReference type="SMR" id="A9WIS2"/>
<dbReference type="FunCoup" id="A9WIS2">
    <property type="interactions" value="371"/>
</dbReference>
<dbReference type="STRING" id="324602.Caur_2593"/>
<dbReference type="EnsemblBacteria" id="ABY35799">
    <property type="protein sequence ID" value="ABY35799"/>
    <property type="gene ID" value="Caur_2593"/>
</dbReference>
<dbReference type="KEGG" id="cau:Caur_2593"/>
<dbReference type="PATRIC" id="fig|324602.8.peg.2921"/>
<dbReference type="eggNOG" id="COG0373">
    <property type="taxonomic scope" value="Bacteria"/>
</dbReference>
<dbReference type="HOGENOM" id="CLU_035113_2_2_0"/>
<dbReference type="InParanoid" id="A9WIS2"/>
<dbReference type="UniPathway" id="UPA00251">
    <property type="reaction ID" value="UER00316"/>
</dbReference>
<dbReference type="UniPathway" id="UPA00668"/>
<dbReference type="Proteomes" id="UP000002008">
    <property type="component" value="Chromosome"/>
</dbReference>
<dbReference type="GO" id="GO:0008883">
    <property type="term" value="F:glutamyl-tRNA reductase activity"/>
    <property type="evidence" value="ECO:0000318"/>
    <property type="project" value="GO_Central"/>
</dbReference>
<dbReference type="GO" id="GO:0050661">
    <property type="term" value="F:NADP binding"/>
    <property type="evidence" value="ECO:0007669"/>
    <property type="project" value="InterPro"/>
</dbReference>
<dbReference type="GO" id="GO:0015995">
    <property type="term" value="P:chlorophyll biosynthetic process"/>
    <property type="evidence" value="ECO:0007669"/>
    <property type="project" value="UniProtKB-UniRule"/>
</dbReference>
<dbReference type="GO" id="GO:0019353">
    <property type="term" value="P:protoporphyrinogen IX biosynthetic process from glutamate"/>
    <property type="evidence" value="ECO:0000318"/>
    <property type="project" value="GO_Central"/>
</dbReference>
<dbReference type="CDD" id="cd05213">
    <property type="entry name" value="NAD_bind_Glutamyl_tRNA_reduct"/>
    <property type="match status" value="1"/>
</dbReference>
<dbReference type="FunFam" id="3.30.460.30:FF:000001">
    <property type="entry name" value="Glutamyl-tRNA reductase"/>
    <property type="match status" value="1"/>
</dbReference>
<dbReference type="FunFam" id="3.40.50.720:FF:000031">
    <property type="entry name" value="Glutamyl-tRNA reductase"/>
    <property type="match status" value="1"/>
</dbReference>
<dbReference type="Gene3D" id="3.30.460.30">
    <property type="entry name" value="Glutamyl-tRNA reductase, N-terminal domain"/>
    <property type="match status" value="1"/>
</dbReference>
<dbReference type="Gene3D" id="3.40.50.720">
    <property type="entry name" value="NAD(P)-binding Rossmann-like Domain"/>
    <property type="match status" value="1"/>
</dbReference>
<dbReference type="HAMAP" id="MF_00087">
    <property type="entry name" value="Glu_tRNA_reductase"/>
    <property type="match status" value="1"/>
</dbReference>
<dbReference type="InterPro" id="IPR000343">
    <property type="entry name" value="4pyrrol_synth_GluRdtase"/>
</dbReference>
<dbReference type="InterPro" id="IPR015896">
    <property type="entry name" value="4pyrrol_synth_GluRdtase_dimer"/>
</dbReference>
<dbReference type="InterPro" id="IPR015895">
    <property type="entry name" value="4pyrrol_synth_GluRdtase_N"/>
</dbReference>
<dbReference type="InterPro" id="IPR036453">
    <property type="entry name" value="GluRdtase_dimer_dom_sf"/>
</dbReference>
<dbReference type="InterPro" id="IPR036343">
    <property type="entry name" value="GluRdtase_N_sf"/>
</dbReference>
<dbReference type="InterPro" id="IPR036291">
    <property type="entry name" value="NAD(P)-bd_dom_sf"/>
</dbReference>
<dbReference type="InterPro" id="IPR006151">
    <property type="entry name" value="Shikm_DH/Glu-tRNA_Rdtase"/>
</dbReference>
<dbReference type="NCBIfam" id="TIGR01035">
    <property type="entry name" value="hemA"/>
    <property type="match status" value="1"/>
</dbReference>
<dbReference type="PANTHER" id="PTHR43013">
    <property type="entry name" value="GLUTAMYL-TRNA REDUCTASE"/>
    <property type="match status" value="1"/>
</dbReference>
<dbReference type="PANTHER" id="PTHR43013:SF1">
    <property type="entry name" value="GLUTAMYL-TRNA REDUCTASE"/>
    <property type="match status" value="1"/>
</dbReference>
<dbReference type="Pfam" id="PF00745">
    <property type="entry name" value="GlutR_dimer"/>
    <property type="match status" value="1"/>
</dbReference>
<dbReference type="Pfam" id="PF05201">
    <property type="entry name" value="GlutR_N"/>
    <property type="match status" value="1"/>
</dbReference>
<dbReference type="Pfam" id="PF01488">
    <property type="entry name" value="Shikimate_DH"/>
    <property type="match status" value="1"/>
</dbReference>
<dbReference type="PIRSF" id="PIRSF000445">
    <property type="entry name" value="4pyrrol_synth_GluRdtase"/>
    <property type="match status" value="1"/>
</dbReference>
<dbReference type="SUPFAM" id="SSF69742">
    <property type="entry name" value="Glutamyl tRNA-reductase catalytic, N-terminal domain"/>
    <property type="match status" value="1"/>
</dbReference>
<dbReference type="SUPFAM" id="SSF69075">
    <property type="entry name" value="Glutamyl tRNA-reductase dimerization domain"/>
    <property type="match status" value="1"/>
</dbReference>
<dbReference type="SUPFAM" id="SSF51735">
    <property type="entry name" value="NAD(P)-binding Rossmann-fold domains"/>
    <property type="match status" value="1"/>
</dbReference>
<accession>A9WIS2</accession>
<sequence>MNLFLAGLDHTTAPVEIREQLAFSQTDLPSALMQLTSSETGTPPLFAEAVILSTCNRVELYGVTNPGTTAQHVVDFLAAFHRRPAASFVHTLYFYQGEAVARHLCATAAGLRSLVLGEAQIQGQVRNAYEAAQRIGSVGSILHRLFQIALVAGKRVRHETTIGKGAASVSQAGVELARRRLGDLRGREVLLIGGGEVSELAAQNLIANGADRLTIVNRTSARAAALAERYGAEMLDFGALPQALARADIVISSTAAPVPIIYRHHVAEAIAHKQRARACGECDPPTMLLIDLAVPRDIAADVAQIPGVHLFTVDDLREVVSHTIELRSAVLEIAQQIVEEQVQEFLSWMRTQEALPVLTMLRQRAEEVRNEELARALRRLHDLSPEQRAVIEGLSRSIVNKLLHLPTRCLREAAAHGQGKRYASILAELFNLEH</sequence>
<proteinExistence type="inferred from homology"/>
<reference key="1">
    <citation type="journal article" date="2011" name="BMC Genomics">
        <title>Complete genome sequence of the filamentous anoxygenic phototrophic bacterium Chloroflexus aurantiacus.</title>
        <authorList>
            <person name="Tang K.H."/>
            <person name="Barry K."/>
            <person name="Chertkov O."/>
            <person name="Dalin E."/>
            <person name="Han C.S."/>
            <person name="Hauser L.J."/>
            <person name="Honchak B.M."/>
            <person name="Karbach L.E."/>
            <person name="Land M.L."/>
            <person name="Lapidus A."/>
            <person name="Larimer F.W."/>
            <person name="Mikhailova N."/>
            <person name="Pitluck S."/>
            <person name="Pierson B.K."/>
            <person name="Blankenship R.E."/>
        </authorList>
    </citation>
    <scope>NUCLEOTIDE SEQUENCE [LARGE SCALE GENOMIC DNA]</scope>
    <source>
        <strain>ATCC 29366 / DSM 635 / J-10-fl</strain>
    </source>
</reference>